<keyword id="KW-0997">Cell inner membrane</keyword>
<keyword id="KW-1003">Cell membrane</keyword>
<keyword id="KW-0342">GTP-binding</keyword>
<keyword id="KW-0378">Hydrolase</keyword>
<keyword id="KW-0472">Membrane</keyword>
<keyword id="KW-0547">Nucleotide-binding</keyword>
<keyword id="KW-0648">Protein biosynthesis</keyword>
<reference key="1">
    <citation type="submission" date="2005-07" db="EMBL/GenBank/DDBJ databases">
        <title>Complete sequence of Synechococcus sp. CC9605.</title>
        <authorList>
            <consortium name="US DOE Joint Genome Institute"/>
            <person name="Copeland A."/>
            <person name="Lucas S."/>
            <person name="Lapidus A."/>
            <person name="Barry K."/>
            <person name="Detter J.C."/>
            <person name="Glavina T."/>
            <person name="Hammon N."/>
            <person name="Israni S."/>
            <person name="Pitluck S."/>
            <person name="Schmutz J."/>
            <person name="Martinez M."/>
            <person name="Larimer F."/>
            <person name="Land M."/>
            <person name="Kyrpides N."/>
            <person name="Ivanova N."/>
            <person name="Richardson P."/>
        </authorList>
    </citation>
    <scope>NUCLEOTIDE SEQUENCE [LARGE SCALE GENOMIC DNA]</scope>
    <source>
        <strain>CC9605</strain>
    </source>
</reference>
<organism>
    <name type="scientific">Synechococcus sp. (strain CC9605)</name>
    <dbReference type="NCBI Taxonomy" id="110662"/>
    <lineage>
        <taxon>Bacteria</taxon>
        <taxon>Bacillati</taxon>
        <taxon>Cyanobacteriota</taxon>
        <taxon>Cyanophyceae</taxon>
        <taxon>Synechococcales</taxon>
        <taxon>Synechococcaceae</taxon>
        <taxon>Synechococcus</taxon>
    </lineage>
</organism>
<evidence type="ECO:0000255" key="1">
    <source>
        <dbReference type="HAMAP-Rule" id="MF_00071"/>
    </source>
</evidence>
<accession>Q3ALG5</accession>
<dbReference type="EC" id="3.6.5.n1" evidence="1"/>
<dbReference type="EMBL" id="CP000110">
    <property type="protein sequence ID" value="ABB34567.1"/>
    <property type="molecule type" value="Genomic_DNA"/>
</dbReference>
<dbReference type="RefSeq" id="WP_011363792.1">
    <property type="nucleotide sequence ID" value="NC_007516.1"/>
</dbReference>
<dbReference type="SMR" id="Q3ALG5"/>
<dbReference type="STRING" id="110662.Syncc9605_0799"/>
<dbReference type="KEGG" id="syd:Syncc9605_0799"/>
<dbReference type="eggNOG" id="COG0481">
    <property type="taxonomic scope" value="Bacteria"/>
</dbReference>
<dbReference type="HOGENOM" id="CLU_009995_3_3_3"/>
<dbReference type="OrthoDB" id="580826at2"/>
<dbReference type="GO" id="GO:0005886">
    <property type="term" value="C:plasma membrane"/>
    <property type="evidence" value="ECO:0007669"/>
    <property type="project" value="UniProtKB-SubCell"/>
</dbReference>
<dbReference type="GO" id="GO:0005525">
    <property type="term" value="F:GTP binding"/>
    <property type="evidence" value="ECO:0007669"/>
    <property type="project" value="UniProtKB-KW"/>
</dbReference>
<dbReference type="GO" id="GO:0003924">
    <property type="term" value="F:GTPase activity"/>
    <property type="evidence" value="ECO:0007669"/>
    <property type="project" value="InterPro"/>
</dbReference>
<dbReference type="GO" id="GO:0043022">
    <property type="term" value="F:ribosome binding"/>
    <property type="evidence" value="ECO:0007669"/>
    <property type="project" value="TreeGrafter"/>
</dbReference>
<dbReference type="GO" id="GO:0045727">
    <property type="term" value="P:positive regulation of translation"/>
    <property type="evidence" value="ECO:0007669"/>
    <property type="project" value="TreeGrafter"/>
</dbReference>
<dbReference type="GO" id="GO:0006412">
    <property type="term" value="P:translation"/>
    <property type="evidence" value="ECO:0007669"/>
    <property type="project" value="UniProtKB-KW"/>
</dbReference>
<dbReference type="CDD" id="cd03699">
    <property type="entry name" value="EF4_II"/>
    <property type="match status" value="1"/>
</dbReference>
<dbReference type="CDD" id="cd16260">
    <property type="entry name" value="EF4_III"/>
    <property type="match status" value="1"/>
</dbReference>
<dbReference type="CDD" id="cd01890">
    <property type="entry name" value="LepA"/>
    <property type="match status" value="1"/>
</dbReference>
<dbReference type="CDD" id="cd03709">
    <property type="entry name" value="lepA_C"/>
    <property type="match status" value="1"/>
</dbReference>
<dbReference type="FunFam" id="3.40.50.300:FF:000078">
    <property type="entry name" value="Elongation factor 4"/>
    <property type="match status" value="1"/>
</dbReference>
<dbReference type="FunFam" id="2.40.30.10:FF:000015">
    <property type="entry name" value="Translation factor GUF1, mitochondrial"/>
    <property type="match status" value="1"/>
</dbReference>
<dbReference type="FunFam" id="3.30.70.240:FF:000007">
    <property type="entry name" value="Translation factor GUF1, mitochondrial"/>
    <property type="match status" value="1"/>
</dbReference>
<dbReference type="FunFam" id="3.30.70.2570:FF:000001">
    <property type="entry name" value="Translation factor GUF1, mitochondrial"/>
    <property type="match status" value="1"/>
</dbReference>
<dbReference type="FunFam" id="3.30.70.870:FF:000004">
    <property type="entry name" value="Translation factor GUF1, mitochondrial"/>
    <property type="match status" value="1"/>
</dbReference>
<dbReference type="Gene3D" id="3.30.70.240">
    <property type="match status" value="1"/>
</dbReference>
<dbReference type="Gene3D" id="3.30.70.2570">
    <property type="entry name" value="Elongation factor 4, C-terminal domain"/>
    <property type="match status" value="1"/>
</dbReference>
<dbReference type="Gene3D" id="3.30.70.870">
    <property type="entry name" value="Elongation Factor G (Translational Gtpase), domain 3"/>
    <property type="match status" value="1"/>
</dbReference>
<dbReference type="Gene3D" id="3.40.50.300">
    <property type="entry name" value="P-loop containing nucleotide triphosphate hydrolases"/>
    <property type="match status" value="1"/>
</dbReference>
<dbReference type="Gene3D" id="2.40.30.10">
    <property type="entry name" value="Translation factors"/>
    <property type="match status" value="1"/>
</dbReference>
<dbReference type="HAMAP" id="MF_03138">
    <property type="entry name" value="GUFP"/>
    <property type="match status" value="1"/>
</dbReference>
<dbReference type="HAMAP" id="MF_00071">
    <property type="entry name" value="LepA"/>
    <property type="match status" value="1"/>
</dbReference>
<dbReference type="InterPro" id="IPR006297">
    <property type="entry name" value="EF-4"/>
</dbReference>
<dbReference type="InterPro" id="IPR035647">
    <property type="entry name" value="EFG_III/V"/>
</dbReference>
<dbReference type="InterPro" id="IPR000640">
    <property type="entry name" value="EFG_V-like"/>
</dbReference>
<dbReference type="InterPro" id="IPR004161">
    <property type="entry name" value="EFTu-like_2"/>
</dbReference>
<dbReference type="InterPro" id="IPR031157">
    <property type="entry name" value="G_TR_CS"/>
</dbReference>
<dbReference type="InterPro" id="IPR027518">
    <property type="entry name" value="GUFP"/>
</dbReference>
<dbReference type="InterPro" id="IPR038363">
    <property type="entry name" value="LepA_C_sf"/>
</dbReference>
<dbReference type="InterPro" id="IPR013842">
    <property type="entry name" value="LepA_CTD"/>
</dbReference>
<dbReference type="InterPro" id="IPR035654">
    <property type="entry name" value="LepA_IV"/>
</dbReference>
<dbReference type="InterPro" id="IPR027417">
    <property type="entry name" value="P-loop_NTPase"/>
</dbReference>
<dbReference type="InterPro" id="IPR005225">
    <property type="entry name" value="Small_GTP-bd"/>
</dbReference>
<dbReference type="InterPro" id="IPR000795">
    <property type="entry name" value="T_Tr_GTP-bd_dom"/>
</dbReference>
<dbReference type="InterPro" id="IPR009000">
    <property type="entry name" value="Transl_B-barrel_sf"/>
</dbReference>
<dbReference type="NCBIfam" id="TIGR01393">
    <property type="entry name" value="lepA"/>
    <property type="match status" value="1"/>
</dbReference>
<dbReference type="NCBIfam" id="TIGR00231">
    <property type="entry name" value="small_GTP"/>
    <property type="match status" value="1"/>
</dbReference>
<dbReference type="PANTHER" id="PTHR43512:SF4">
    <property type="entry name" value="TRANSLATION FACTOR GUF1 HOMOLOG, CHLOROPLASTIC"/>
    <property type="match status" value="1"/>
</dbReference>
<dbReference type="PANTHER" id="PTHR43512">
    <property type="entry name" value="TRANSLATION FACTOR GUF1-RELATED"/>
    <property type="match status" value="1"/>
</dbReference>
<dbReference type="Pfam" id="PF00679">
    <property type="entry name" value="EFG_C"/>
    <property type="match status" value="1"/>
</dbReference>
<dbReference type="Pfam" id="PF00009">
    <property type="entry name" value="GTP_EFTU"/>
    <property type="match status" value="1"/>
</dbReference>
<dbReference type="Pfam" id="PF03144">
    <property type="entry name" value="GTP_EFTU_D2"/>
    <property type="match status" value="1"/>
</dbReference>
<dbReference type="Pfam" id="PF06421">
    <property type="entry name" value="LepA_C"/>
    <property type="match status" value="1"/>
</dbReference>
<dbReference type="PRINTS" id="PR00315">
    <property type="entry name" value="ELONGATNFCT"/>
</dbReference>
<dbReference type="SUPFAM" id="SSF54980">
    <property type="entry name" value="EF-G C-terminal domain-like"/>
    <property type="match status" value="2"/>
</dbReference>
<dbReference type="SUPFAM" id="SSF52540">
    <property type="entry name" value="P-loop containing nucleoside triphosphate hydrolases"/>
    <property type="match status" value="1"/>
</dbReference>
<dbReference type="SUPFAM" id="SSF50447">
    <property type="entry name" value="Translation proteins"/>
    <property type="match status" value="1"/>
</dbReference>
<dbReference type="PROSITE" id="PS00301">
    <property type="entry name" value="G_TR_1"/>
    <property type="match status" value="1"/>
</dbReference>
<dbReference type="PROSITE" id="PS51722">
    <property type="entry name" value="G_TR_2"/>
    <property type="match status" value="1"/>
</dbReference>
<sequence length="606" mass="67255">MTDAPVSRIRNFCIIAHIDHGKSTLADRLLQDTGTVANRDMQDQFLDNMDLERERGITIKLQAARMNYTAAHGEEYVLNLIDTPGHVDFSYEVSRSLQACEGALLVVDASQGVEAQTLANVYLALDNDLEIIPVLNKIDLPGADPDRIKEEVEAIIGLDCDNAIPCSAKTGLGVPEILQAVVDRVPPPKDAVEEPTKALIFDSYYDPYRGVIVYFRVMSGRINCKDKVLLMASKKTYELDEIGIMAPDQKKVDELHAGEVGYLAASIKAVADARVGDTITLVNAPADEALPGYTEAKPMVFCGLFPTEADQYPDLRDALDKLQLSDAALKYEPETSSAMGFGFRCGFLGLLHMEIVQERLEREYDLDLIVTAPSVIYKVNMIDGSEVMVDNPATLPDPQKRESIEEPYVRMEIYAPNEYNGALMGLCQERRGDYIDMKYITTDRVTLIYELPLAEVVTDFFDQMKTRTQGYASMEYSLIGYRKNQLVRLDVLINGERADALTTIVHQDKAYNVGKALVEKLKELIPRQQFKIPIQASIGSRIIASTSISAIRKDVLAKCYGGDISRKKKLLKKQAKGKKRMKAMGKVDVPQEAFMAVLKLNDGGGS</sequence>
<name>LEPA_SYNSC</name>
<proteinExistence type="inferred from homology"/>
<comment type="function">
    <text evidence="1">Required for accurate and efficient protein synthesis under certain stress conditions. May act as a fidelity factor of the translation reaction, by catalyzing a one-codon backward translocation of tRNAs on improperly translocated ribosomes. Back-translocation proceeds from a post-translocation (POST) complex to a pre-translocation (PRE) complex, thus giving elongation factor G a second chance to translocate the tRNAs correctly. Binds to ribosomes in a GTP-dependent manner.</text>
</comment>
<comment type="catalytic activity">
    <reaction evidence="1">
        <text>GTP + H2O = GDP + phosphate + H(+)</text>
        <dbReference type="Rhea" id="RHEA:19669"/>
        <dbReference type="ChEBI" id="CHEBI:15377"/>
        <dbReference type="ChEBI" id="CHEBI:15378"/>
        <dbReference type="ChEBI" id="CHEBI:37565"/>
        <dbReference type="ChEBI" id="CHEBI:43474"/>
        <dbReference type="ChEBI" id="CHEBI:58189"/>
        <dbReference type="EC" id="3.6.5.n1"/>
    </reaction>
</comment>
<comment type="subcellular location">
    <subcellularLocation>
        <location evidence="1">Cell inner membrane</location>
        <topology evidence="1">Peripheral membrane protein</topology>
        <orientation evidence="1">Cytoplasmic side</orientation>
    </subcellularLocation>
</comment>
<comment type="similarity">
    <text evidence="1">Belongs to the TRAFAC class translation factor GTPase superfamily. Classic translation factor GTPase family. LepA subfamily.</text>
</comment>
<protein>
    <recommendedName>
        <fullName evidence="1">Elongation factor 4</fullName>
        <shortName evidence="1">EF-4</shortName>
        <ecNumber evidence="1">3.6.5.n1</ecNumber>
    </recommendedName>
    <alternativeName>
        <fullName evidence="1">Ribosomal back-translocase LepA</fullName>
    </alternativeName>
</protein>
<gene>
    <name evidence="1" type="primary">lepA</name>
    <name type="ordered locus">Syncc9605_0799</name>
</gene>
<feature type="chain" id="PRO_0000265715" description="Elongation factor 4">
    <location>
        <begin position="1"/>
        <end position="606"/>
    </location>
</feature>
<feature type="domain" description="tr-type G">
    <location>
        <begin position="7"/>
        <end position="189"/>
    </location>
</feature>
<feature type="binding site" evidence="1">
    <location>
        <begin position="19"/>
        <end position="24"/>
    </location>
    <ligand>
        <name>GTP</name>
        <dbReference type="ChEBI" id="CHEBI:37565"/>
    </ligand>
</feature>
<feature type="binding site" evidence="1">
    <location>
        <begin position="136"/>
        <end position="139"/>
    </location>
    <ligand>
        <name>GTP</name>
        <dbReference type="ChEBI" id="CHEBI:37565"/>
    </ligand>
</feature>